<reference key="1">
    <citation type="journal article" date="2005" name="PLoS Biol.">
        <title>Major structural differences and novel potential virulence mechanisms from the genomes of multiple Campylobacter species.</title>
        <authorList>
            <person name="Fouts D.E."/>
            <person name="Mongodin E.F."/>
            <person name="Mandrell R.E."/>
            <person name="Miller W.G."/>
            <person name="Rasko D.A."/>
            <person name="Ravel J."/>
            <person name="Brinkac L.M."/>
            <person name="DeBoy R.T."/>
            <person name="Parker C.T."/>
            <person name="Daugherty S.C."/>
            <person name="Dodson R.J."/>
            <person name="Durkin A.S."/>
            <person name="Madupu R."/>
            <person name="Sullivan S.A."/>
            <person name="Shetty J.U."/>
            <person name="Ayodeji M.A."/>
            <person name="Shvartsbeyn A."/>
            <person name="Schatz M.C."/>
            <person name="Badger J.H."/>
            <person name="Fraser C.M."/>
            <person name="Nelson K.E."/>
        </authorList>
    </citation>
    <scope>NUCLEOTIDE SEQUENCE [LARGE SCALE GENOMIC DNA]</scope>
    <source>
        <strain>RM1221</strain>
    </source>
</reference>
<name>RBFA_CAMJR</name>
<feature type="chain" id="PRO_0000102640" description="Ribosome-binding factor A">
    <location>
        <begin position="1"/>
        <end position="120"/>
    </location>
</feature>
<comment type="function">
    <text evidence="1">One of several proteins that assist in the late maturation steps of the functional core of the 30S ribosomal subunit. Associates with free 30S ribosomal subunits (but not with 30S subunits that are part of 70S ribosomes or polysomes). Required for efficient processing of 16S rRNA. May interact with the 5'-terminal helix region of 16S rRNA.</text>
</comment>
<comment type="subunit">
    <text evidence="1">Monomer. Binds 30S ribosomal subunits, but not 50S ribosomal subunits or 70S ribosomes.</text>
</comment>
<comment type="subcellular location">
    <subcellularLocation>
        <location evidence="1">Cytoplasm</location>
    </subcellularLocation>
</comment>
<comment type="similarity">
    <text evidence="1">Belongs to the RbfA family.</text>
</comment>
<dbReference type="EMBL" id="CP000025">
    <property type="protein sequence ID" value="AAW34727.1"/>
    <property type="molecule type" value="Genomic_DNA"/>
</dbReference>
<dbReference type="RefSeq" id="WP_002778650.1">
    <property type="nucleotide sequence ID" value="NC_003912.7"/>
</dbReference>
<dbReference type="SMR" id="Q5HX29"/>
<dbReference type="DNASU" id="3230895"/>
<dbReference type="GeneID" id="66544860"/>
<dbReference type="KEGG" id="cjr:CJE0132"/>
<dbReference type="HOGENOM" id="CLU_089475_6_5_7"/>
<dbReference type="GO" id="GO:0005737">
    <property type="term" value="C:cytoplasm"/>
    <property type="evidence" value="ECO:0007669"/>
    <property type="project" value="UniProtKB-SubCell"/>
</dbReference>
<dbReference type="GO" id="GO:0030490">
    <property type="term" value="P:maturation of SSU-rRNA"/>
    <property type="evidence" value="ECO:0007669"/>
    <property type="project" value="UniProtKB-UniRule"/>
</dbReference>
<dbReference type="Gene3D" id="3.30.300.20">
    <property type="match status" value="1"/>
</dbReference>
<dbReference type="HAMAP" id="MF_00003">
    <property type="entry name" value="RbfA"/>
    <property type="match status" value="1"/>
</dbReference>
<dbReference type="InterPro" id="IPR015946">
    <property type="entry name" value="KH_dom-like_a/b"/>
</dbReference>
<dbReference type="InterPro" id="IPR000238">
    <property type="entry name" value="RbfA"/>
</dbReference>
<dbReference type="InterPro" id="IPR023799">
    <property type="entry name" value="RbfA_dom_sf"/>
</dbReference>
<dbReference type="InterPro" id="IPR020053">
    <property type="entry name" value="Ribosome-bd_factorA_CS"/>
</dbReference>
<dbReference type="NCBIfam" id="NF001805">
    <property type="entry name" value="PRK00521.3-3"/>
    <property type="match status" value="1"/>
</dbReference>
<dbReference type="NCBIfam" id="NF001806">
    <property type="entry name" value="PRK00521.3-4"/>
    <property type="match status" value="1"/>
</dbReference>
<dbReference type="NCBIfam" id="TIGR00082">
    <property type="entry name" value="rbfA"/>
    <property type="match status" value="1"/>
</dbReference>
<dbReference type="Pfam" id="PF02033">
    <property type="entry name" value="RBFA"/>
    <property type="match status" value="1"/>
</dbReference>
<dbReference type="SUPFAM" id="SSF89919">
    <property type="entry name" value="Ribosome-binding factor A, RbfA"/>
    <property type="match status" value="1"/>
</dbReference>
<dbReference type="PROSITE" id="PS01319">
    <property type="entry name" value="RBFA"/>
    <property type="match status" value="1"/>
</dbReference>
<evidence type="ECO:0000255" key="1">
    <source>
        <dbReference type="HAMAP-Rule" id="MF_00003"/>
    </source>
</evidence>
<sequence length="120" mass="14302">MNPSEIKKLRTESILKELIPEALANLDDENLKNLCVVDVECKKGRYDAFVYLDKMFFNVHEQEKILSSLKKASRALQNYCMSEQGWYRCPNFHFKFDDRLEYQNHMDALFEKIKKDKNES</sequence>
<accession>Q5HX29</accession>
<gene>
    <name evidence="1" type="primary">rbfA</name>
    <name type="ordered locus">CJE0132</name>
</gene>
<protein>
    <recommendedName>
        <fullName evidence="1">Ribosome-binding factor A</fullName>
    </recommendedName>
</protein>
<keyword id="KW-0963">Cytoplasm</keyword>
<keyword id="KW-0690">Ribosome biogenesis</keyword>
<organism>
    <name type="scientific">Campylobacter jejuni (strain RM1221)</name>
    <dbReference type="NCBI Taxonomy" id="195099"/>
    <lineage>
        <taxon>Bacteria</taxon>
        <taxon>Pseudomonadati</taxon>
        <taxon>Campylobacterota</taxon>
        <taxon>Epsilonproteobacteria</taxon>
        <taxon>Campylobacterales</taxon>
        <taxon>Campylobacteraceae</taxon>
        <taxon>Campylobacter</taxon>
    </lineage>
</organism>
<proteinExistence type="inferred from homology"/>